<organism>
    <name type="scientific">Bradyrhizobium diazoefficiens (strain JCM 10833 / BCRC 13528 / IAM 13628 / NBRC 14792 / USDA 110)</name>
    <dbReference type="NCBI Taxonomy" id="224911"/>
    <lineage>
        <taxon>Bacteria</taxon>
        <taxon>Pseudomonadati</taxon>
        <taxon>Pseudomonadota</taxon>
        <taxon>Alphaproteobacteria</taxon>
        <taxon>Hyphomicrobiales</taxon>
        <taxon>Nitrobacteraceae</taxon>
        <taxon>Bradyrhizobium</taxon>
    </lineage>
</organism>
<dbReference type="EC" id="6.2.1.n2"/>
<dbReference type="EMBL" id="BA000040">
    <property type="protein sequence ID" value="BAC51547.1"/>
    <property type="molecule type" value="Genomic_DNA"/>
</dbReference>
<dbReference type="RefSeq" id="NP_772922.1">
    <property type="nucleotide sequence ID" value="NC_004463.1"/>
</dbReference>
<dbReference type="RefSeq" id="WP_011089022.1">
    <property type="nucleotide sequence ID" value="NC_004463.1"/>
</dbReference>
<dbReference type="SMR" id="Q89GR3"/>
<dbReference type="STRING" id="224911.AAV28_28970"/>
<dbReference type="EnsemblBacteria" id="BAC51547">
    <property type="protein sequence ID" value="BAC51547"/>
    <property type="gene ID" value="BAC51547"/>
</dbReference>
<dbReference type="GeneID" id="46493269"/>
<dbReference type="KEGG" id="bja:bll6282"/>
<dbReference type="PATRIC" id="fig|224911.44.peg.6260"/>
<dbReference type="eggNOG" id="COG0172">
    <property type="taxonomic scope" value="Bacteria"/>
</dbReference>
<dbReference type="HOGENOM" id="CLU_054340_0_0_5"/>
<dbReference type="InParanoid" id="Q89GR3"/>
<dbReference type="OrthoDB" id="583154at2"/>
<dbReference type="PhylomeDB" id="Q89GR3"/>
<dbReference type="BRENDA" id="6.2.1.B4">
    <property type="organism ID" value="929"/>
</dbReference>
<dbReference type="SABIO-RK" id="Q89GR3"/>
<dbReference type="Proteomes" id="UP000002526">
    <property type="component" value="Chromosome"/>
</dbReference>
<dbReference type="GO" id="GO:0005524">
    <property type="term" value="F:ATP binding"/>
    <property type="evidence" value="ECO:0007669"/>
    <property type="project" value="UniProtKB-KW"/>
</dbReference>
<dbReference type="GO" id="GO:0016874">
    <property type="term" value="F:ligase activity"/>
    <property type="evidence" value="ECO:0007669"/>
    <property type="project" value="UniProtKB-KW"/>
</dbReference>
<dbReference type="GO" id="GO:0046872">
    <property type="term" value="F:metal ion binding"/>
    <property type="evidence" value="ECO:0007669"/>
    <property type="project" value="UniProtKB-KW"/>
</dbReference>
<dbReference type="CDD" id="cd00670">
    <property type="entry name" value="Gly_His_Pro_Ser_Thr_tRS_core"/>
    <property type="match status" value="1"/>
</dbReference>
<dbReference type="Gene3D" id="3.30.930.10">
    <property type="entry name" value="Bira Bifunctional Protein, Domain 2"/>
    <property type="match status" value="1"/>
</dbReference>
<dbReference type="InterPro" id="IPR045864">
    <property type="entry name" value="aa-tRNA-synth_II/BPL/LPL"/>
</dbReference>
<dbReference type="NCBIfam" id="NF005479">
    <property type="entry name" value="PRK07080.1"/>
    <property type="match status" value="1"/>
</dbReference>
<dbReference type="SUPFAM" id="SSF55681">
    <property type="entry name" value="Class II aaRS and biotin synthetases"/>
    <property type="match status" value="1"/>
</dbReference>
<accession>Q89GR3</accession>
<name>AACL2_BRADU</name>
<keyword id="KW-0067">ATP-binding</keyword>
<keyword id="KW-0436">Ligase</keyword>
<keyword id="KW-0479">Metal-binding</keyword>
<keyword id="KW-0547">Nucleotide-binding</keyword>
<keyword id="KW-1185">Reference proteome</keyword>
<keyword id="KW-0862">Zinc</keyword>
<comment type="function">
    <text evidence="2">Catalyzes the ATP-dependent activation of L-glycine and its transfer to the phosphopantetheine prosthetic group covalently attached to the vicinal carrier protein blr6284 of yet unknown function. May participate in nonribosomal peptide synthesis or related processes. L-alanine is a poor substrate whereas L-serine or D-amino acids are not substrates for ATP-dependent activation. Does not display tRNA aminoacylation activity.</text>
</comment>
<comment type="catalytic activity">
    <reaction evidence="2">
        <text>an L-alpha-amino acid + holo-[ACP] + ATP = an L-alpha-aminoacyl-[ACP] + AMP + diphosphate</text>
        <dbReference type="Rhea" id="RHEA:52660"/>
        <dbReference type="Rhea" id="RHEA-COMP:9685"/>
        <dbReference type="Rhea" id="RHEA-COMP:13877"/>
        <dbReference type="ChEBI" id="CHEBI:30616"/>
        <dbReference type="ChEBI" id="CHEBI:33019"/>
        <dbReference type="ChEBI" id="CHEBI:59869"/>
        <dbReference type="ChEBI" id="CHEBI:64479"/>
        <dbReference type="ChEBI" id="CHEBI:138175"/>
        <dbReference type="ChEBI" id="CHEBI:456215"/>
        <dbReference type="EC" id="6.2.1.n2"/>
    </reaction>
</comment>
<comment type="cofactor">
    <cofactor evidence="2">
        <name>Zn(2+)</name>
        <dbReference type="ChEBI" id="CHEBI:29105"/>
    </cofactor>
    <text evidence="2">Binds 1 Zn(2+) ion per subunit.</text>
</comment>
<comment type="biophysicochemical properties">
    <kinetics>
        <KM evidence="2">3.9 uM for carrier protein blr6284</KM>
        <KM evidence="2">0.58 mM for L-glycine</KM>
        <KM evidence="2">14 mM for L-alanine</KM>
        <text>The catalytic efficiency of the glycine activation reaction is 300-fold higher than that of alanine activation.</text>
    </kinetics>
</comment>
<comment type="subunit">
    <text evidence="2">Homodimer.</text>
</comment>
<comment type="miscellaneous">
    <text>Lacks the N-terminal tRNA-binding domain compared to class-II aminoacyl-tRNA synthetases.</text>
</comment>
<comment type="similarity">
    <text evidence="3">Belongs to the class-II aminoacyl-tRNA synthetase family. Amino acid--[acyl-carrier-protein] ligase subfamily.</text>
</comment>
<feature type="chain" id="PRO_0000401187" description="Amino acid--[acyl-carrier-protein] ligase 2">
    <location>
        <begin position="1"/>
        <end position="334"/>
    </location>
</feature>
<feature type="binding site" evidence="1">
    <location>
        <position position="131"/>
    </location>
    <ligand>
        <name>Zn(2+)</name>
        <dbReference type="ChEBI" id="CHEBI:29105"/>
        <note>catalytic</note>
    </ligand>
</feature>
<feature type="binding site" evidence="1">
    <location>
        <position position="159"/>
    </location>
    <ligand>
        <name>ATP</name>
        <dbReference type="ChEBI" id="CHEBI:30616"/>
    </ligand>
</feature>
<feature type="binding site" evidence="1">
    <location>
        <position position="161"/>
    </location>
    <ligand>
        <name>ATP</name>
        <dbReference type="ChEBI" id="CHEBI:30616"/>
    </ligand>
</feature>
<feature type="binding site" evidence="1">
    <location>
        <begin position="168"/>
        <end position="169"/>
    </location>
    <ligand>
        <name>ATP</name>
        <dbReference type="ChEBI" id="CHEBI:30616"/>
    </ligand>
</feature>
<feature type="binding site" evidence="1">
    <location>
        <position position="176"/>
    </location>
    <ligand>
        <name>an L-alpha-amino acid</name>
        <dbReference type="ChEBI" id="CHEBI:59869"/>
        <note>substrate</note>
    </ligand>
</feature>
<feature type="binding site" evidence="1">
    <location>
        <position position="176"/>
    </location>
    <ligand>
        <name>Zn(2+)</name>
        <dbReference type="ChEBI" id="CHEBI:29105"/>
        <note>catalytic</note>
    </ligand>
</feature>
<feature type="binding site" evidence="1">
    <location>
        <position position="235"/>
    </location>
    <ligand>
        <name>ATP</name>
        <dbReference type="ChEBI" id="CHEBI:30616"/>
    </ligand>
</feature>
<feature type="binding site" evidence="1">
    <location>
        <begin position="250"/>
        <end position="253"/>
    </location>
    <ligand>
        <name>ATP</name>
        <dbReference type="ChEBI" id="CHEBI:30616"/>
    </ligand>
</feature>
<feature type="binding site" evidence="1">
    <location>
        <position position="279"/>
    </location>
    <ligand>
        <name>Zn(2+)</name>
        <dbReference type="ChEBI" id="CHEBI:29105"/>
        <note>catalytic</note>
    </ligand>
</feature>
<feature type="binding site" evidence="1">
    <location>
        <position position="286"/>
    </location>
    <ligand>
        <name>ATP</name>
        <dbReference type="ChEBI" id="CHEBI:30616"/>
    </ligand>
</feature>
<gene>
    <name type="ordered locus">bll6282</name>
</gene>
<reference key="1">
    <citation type="journal article" date="2002" name="DNA Res.">
        <title>Complete genomic sequence of nitrogen-fixing symbiotic bacterium Bradyrhizobium japonicum USDA110.</title>
        <authorList>
            <person name="Kaneko T."/>
            <person name="Nakamura Y."/>
            <person name="Sato S."/>
            <person name="Minamisawa K."/>
            <person name="Uchiumi T."/>
            <person name="Sasamoto S."/>
            <person name="Watanabe A."/>
            <person name="Idesawa K."/>
            <person name="Iriguchi M."/>
            <person name="Kawashima K."/>
            <person name="Kohara M."/>
            <person name="Matsumoto M."/>
            <person name="Shimpo S."/>
            <person name="Tsuruoka H."/>
            <person name="Wada T."/>
            <person name="Yamada M."/>
            <person name="Tabata S."/>
        </authorList>
    </citation>
    <scope>NUCLEOTIDE SEQUENCE [LARGE SCALE GENOMIC DNA]</scope>
    <source>
        <strain>JCM 10833 / BCRC 13528 / IAM 13628 / NBRC 14792 / USDA 110</strain>
    </source>
</reference>
<reference key="2">
    <citation type="journal article" date="2010" name="Proc. Natl. Acad. Sci. U.S.A.">
        <title>Homologs of aminoacyl-tRNA synthetases acylate carrier proteins and provide a link between ribosomal and nonribosomal peptide synthesis.</title>
        <authorList>
            <person name="Mocibob M."/>
            <person name="Ivic N."/>
            <person name="Bilokapic S."/>
            <person name="Maier T."/>
            <person name="Luic M."/>
            <person name="Ban N."/>
            <person name="Weygand-Durasevic I."/>
        </authorList>
    </citation>
    <scope>FUNCTION</scope>
    <scope>CATALYTIC ACTIVITY</scope>
    <scope>SUBSTRATE SPECIFICITY</scope>
    <scope>COFACTOR</scope>
    <scope>KINETIC PARAMETERS</scope>
    <scope>SUBUNIT</scope>
    <source>
        <strain>JCM 10833 / BCRC 13528 / IAM 13628 / NBRC 14792 / USDA 110</strain>
    </source>
</reference>
<proteinExistence type="evidence at protein level"/>
<sequence length="334" mass="36803">MNLAIVEAPADSTPPPADPLDHLADALFHEMGSPGVYGRTALYEDVVERIAAVISRNREPNTEVMRFPPVMNRAQLERSGYLKSFPNLLGCVCGLHGIESEIDAAISRFDAGGDWTESLSPADLVLSPAACYPLYPIAASRGPVPAAGWSFDVAADCFRREPSRHLDRLQSFRMREFVCIGSADHVSAFRERWIIRAQKIARDLGLTFRIDHANDPFFGRVGQMMAVSQKQLSLKFELLVPLRSEERPTACMSFNYHRDHFGTTWGIVDAAGEPAHTACVAFGMDRLAVAMFHTHGKDVALWPIAVRDLLGLAQTDRGAPSAFEEYRCAKEAGS</sequence>
<evidence type="ECO:0000250" key="1"/>
<evidence type="ECO:0000269" key="2">
    <source>
    </source>
</evidence>
<evidence type="ECO:0000305" key="3"/>
<protein>
    <recommendedName>
        <fullName>Amino acid--[acyl-carrier-protein] ligase 2</fullName>
        <ecNumber>6.2.1.n2</ecNumber>
    </recommendedName>
    <alternativeName>
        <fullName>Amino acid:[carrier-protein] ligase [AMP forming] 2</fullName>
        <shortName>aa:CP ligase 2</shortName>
    </alternativeName>
    <alternativeName>
        <fullName>Aminoacyl-[acyl-carrier-protein] synthetase 2</fullName>
    </alternativeName>
    <alternativeName>
        <fullName>L-glycine:[acyl-carrier-protein] ligase 2</fullName>
    </alternativeName>
</protein>